<proteinExistence type="evidence at protein level"/>
<protein>
    <recommendedName>
        <fullName evidence="1">Protein GrpE</fullName>
    </recommendedName>
    <alternativeName>
        <fullName evidence="1">HSP-70 cofactor</fullName>
    </alternativeName>
</protein>
<evidence type="ECO:0000255" key="1">
    <source>
        <dbReference type="HAMAP-Rule" id="MF_01151"/>
    </source>
</evidence>
<evidence type="ECO:0000305" key="2"/>
<keyword id="KW-0143">Chaperone</keyword>
<keyword id="KW-0963">Cytoplasm</keyword>
<keyword id="KW-1185">Reference proteome</keyword>
<keyword id="KW-0346">Stress response</keyword>
<gene>
    <name evidence="1" type="primary">grpE</name>
    <name type="ordered locus">MPN_120</name>
    <name type="ORF">MP034</name>
</gene>
<name>GRPE_MYCPN</name>
<feature type="chain" id="PRO_0000113821" description="Protein GrpE">
    <location>
        <begin position="1"/>
        <end position="217"/>
    </location>
</feature>
<sequence>MSENSLTITEILSSIRTLLVKHNKAKVTQIEKELLQAVAELEKKFKQQVQNFNELQQKIPNLQKVNEEFRLKVEKIQEEAQKKIQEKVAELTIKSKEELENAKKYVIEKSIDQPLIIIDQFEIALSYAQKDPQVKNYTTGFNMVLDAFSRWLEGFGVTKIAIEPGAQFDEKVMAALEVVPSDQPANTVVKVSKSGYKLHDKVIRFASVVVSQGNKTE</sequence>
<comment type="function">
    <text evidence="1">Participates actively in the response to hyperosmotic and heat shock by preventing the aggregation of stress-denatured proteins, in association with DnaK and GrpE. It is the nucleotide exchange factor for DnaK and may function as a thermosensor. Unfolded proteins bind initially to DnaJ; upon interaction with the DnaJ-bound protein, DnaK hydrolyzes its bound ATP, resulting in the formation of a stable complex. GrpE releases ADP from DnaK; ATP binding to DnaK triggers the release of the substrate protein, thus completing the reaction cycle. Several rounds of ATP-dependent interactions between DnaJ, DnaK and GrpE are required for fully efficient folding.</text>
</comment>
<comment type="subunit">
    <text evidence="1">Homodimer.</text>
</comment>
<comment type="subcellular location">
    <subcellularLocation>
        <location evidence="2">Cytoplasm</location>
    </subcellularLocation>
</comment>
<comment type="similarity">
    <text evidence="1">Belongs to the GrpE family.</text>
</comment>
<dbReference type="EMBL" id="U00089">
    <property type="protein sequence ID" value="AAB95682.1"/>
    <property type="molecule type" value="Genomic_DNA"/>
</dbReference>
<dbReference type="PIR" id="S73360">
    <property type="entry name" value="S73360"/>
</dbReference>
<dbReference type="RefSeq" id="NP_109808.1">
    <property type="nucleotide sequence ID" value="NC_000912.1"/>
</dbReference>
<dbReference type="RefSeq" id="WP_010874477.1">
    <property type="nucleotide sequence ID" value="NZ_OU342337.1"/>
</dbReference>
<dbReference type="SMR" id="P78017"/>
<dbReference type="IntAct" id="P78017">
    <property type="interactions" value="1"/>
</dbReference>
<dbReference type="STRING" id="272634.MPN_120"/>
<dbReference type="EnsemblBacteria" id="AAB95682">
    <property type="protein sequence ID" value="AAB95682"/>
    <property type="gene ID" value="MPN_120"/>
</dbReference>
<dbReference type="KEGG" id="mpn:MPN_120"/>
<dbReference type="PATRIC" id="fig|272634.6.peg.127"/>
<dbReference type="HOGENOM" id="CLU_1271142_0_0_14"/>
<dbReference type="OrthoDB" id="9812586at2"/>
<dbReference type="BioCyc" id="MPNE272634:G1GJ3-200-MONOMER"/>
<dbReference type="Proteomes" id="UP000000808">
    <property type="component" value="Chromosome"/>
</dbReference>
<dbReference type="GO" id="GO:0005737">
    <property type="term" value="C:cytoplasm"/>
    <property type="evidence" value="ECO:0007669"/>
    <property type="project" value="UniProtKB-SubCell"/>
</dbReference>
<dbReference type="GO" id="GO:0000774">
    <property type="term" value="F:adenyl-nucleotide exchange factor activity"/>
    <property type="evidence" value="ECO:0007669"/>
    <property type="project" value="InterPro"/>
</dbReference>
<dbReference type="GO" id="GO:0042803">
    <property type="term" value="F:protein homodimerization activity"/>
    <property type="evidence" value="ECO:0007669"/>
    <property type="project" value="InterPro"/>
</dbReference>
<dbReference type="GO" id="GO:0051087">
    <property type="term" value="F:protein-folding chaperone binding"/>
    <property type="evidence" value="ECO:0007669"/>
    <property type="project" value="InterPro"/>
</dbReference>
<dbReference type="GO" id="GO:0051082">
    <property type="term" value="F:unfolded protein binding"/>
    <property type="evidence" value="ECO:0007669"/>
    <property type="project" value="TreeGrafter"/>
</dbReference>
<dbReference type="GO" id="GO:0006457">
    <property type="term" value="P:protein folding"/>
    <property type="evidence" value="ECO:0007669"/>
    <property type="project" value="InterPro"/>
</dbReference>
<dbReference type="CDD" id="cd00446">
    <property type="entry name" value="GrpE"/>
    <property type="match status" value="1"/>
</dbReference>
<dbReference type="Gene3D" id="3.90.20.20">
    <property type="match status" value="1"/>
</dbReference>
<dbReference type="Gene3D" id="2.30.22.10">
    <property type="entry name" value="Head domain of nucleotide exchange factor GrpE"/>
    <property type="match status" value="1"/>
</dbReference>
<dbReference type="HAMAP" id="MF_01151">
    <property type="entry name" value="GrpE"/>
    <property type="match status" value="1"/>
</dbReference>
<dbReference type="InterPro" id="IPR000740">
    <property type="entry name" value="GrpE"/>
</dbReference>
<dbReference type="InterPro" id="IPR013805">
    <property type="entry name" value="GrpE_coiled_coil"/>
</dbReference>
<dbReference type="InterPro" id="IPR009012">
    <property type="entry name" value="GrpE_head"/>
</dbReference>
<dbReference type="PANTHER" id="PTHR21237">
    <property type="entry name" value="GRPE PROTEIN"/>
    <property type="match status" value="1"/>
</dbReference>
<dbReference type="PANTHER" id="PTHR21237:SF23">
    <property type="entry name" value="GRPE PROTEIN HOMOLOG, MITOCHONDRIAL"/>
    <property type="match status" value="1"/>
</dbReference>
<dbReference type="Pfam" id="PF01025">
    <property type="entry name" value="GrpE"/>
    <property type="match status" value="1"/>
</dbReference>
<dbReference type="PRINTS" id="PR00773">
    <property type="entry name" value="GRPEPROTEIN"/>
</dbReference>
<dbReference type="SUPFAM" id="SSF58014">
    <property type="entry name" value="Coiled-coil domain of nucleotide exchange factor GrpE"/>
    <property type="match status" value="1"/>
</dbReference>
<dbReference type="SUPFAM" id="SSF51064">
    <property type="entry name" value="Head domain of nucleotide exchange factor GrpE"/>
    <property type="match status" value="1"/>
</dbReference>
<dbReference type="PROSITE" id="PS01071">
    <property type="entry name" value="GRPE"/>
    <property type="match status" value="1"/>
</dbReference>
<reference key="1">
    <citation type="journal article" date="1996" name="Nucleic Acids Res.">
        <title>Complete sequence analysis of the genome of the bacterium Mycoplasma pneumoniae.</title>
        <authorList>
            <person name="Himmelreich R."/>
            <person name="Hilbert H."/>
            <person name="Plagens H."/>
            <person name="Pirkl E."/>
            <person name="Li B.-C."/>
            <person name="Herrmann R."/>
        </authorList>
    </citation>
    <scope>NUCLEOTIDE SEQUENCE [LARGE SCALE GENOMIC DNA]</scope>
    <source>
        <strain>ATCC 29342 / M129 / Subtype 1</strain>
    </source>
</reference>
<reference key="2">
    <citation type="journal article" date="2000" name="Electrophoresis">
        <title>Towards a two-dimensional proteome map of Mycoplasma pneumoniae.</title>
        <authorList>
            <person name="Regula J.T."/>
            <person name="Ueberle B."/>
            <person name="Boguth G."/>
            <person name="Goerg A."/>
            <person name="Schnoelzer M."/>
            <person name="Herrmann R."/>
            <person name="Frank R."/>
        </authorList>
    </citation>
    <scope>IDENTIFICATION BY MASS SPECTROMETRY</scope>
    <source>
        <strain>ATCC 29342 / M129 / Subtype 1</strain>
    </source>
</reference>
<organism>
    <name type="scientific">Mycoplasma pneumoniae (strain ATCC 29342 / M129 / Subtype 1)</name>
    <name type="common">Mycoplasmoides pneumoniae</name>
    <dbReference type="NCBI Taxonomy" id="272634"/>
    <lineage>
        <taxon>Bacteria</taxon>
        <taxon>Bacillati</taxon>
        <taxon>Mycoplasmatota</taxon>
        <taxon>Mycoplasmoidales</taxon>
        <taxon>Mycoplasmoidaceae</taxon>
        <taxon>Mycoplasmoides</taxon>
    </lineage>
</organism>
<accession>P78017</accession>